<sequence length="131" mass="14693">MDKKTIYFICTGNSCRSQMAEGWGKKILGDEWQVYSGGIEAHGVNPKAIEAMKEVGIDISNHTSNLIDQNILHQSDLVVTLCSDADKNCPILPPSVKKEHWGFDDPAGKPWSEFQRVRDEIKTAIESFKTR</sequence>
<organism>
    <name type="scientific">Staphylococcus epidermidis (strain ATCC 12228 / FDA PCI 1200)</name>
    <dbReference type="NCBI Taxonomy" id="176280"/>
    <lineage>
        <taxon>Bacteria</taxon>
        <taxon>Bacillati</taxon>
        <taxon>Bacillota</taxon>
        <taxon>Bacilli</taxon>
        <taxon>Bacillales</taxon>
        <taxon>Staphylococcaceae</taxon>
        <taxon>Staphylococcus</taxon>
    </lineage>
</organism>
<dbReference type="EC" id="1.20.4.4" evidence="1"/>
<dbReference type="EMBL" id="AE015929">
    <property type="protein sequence ID" value="AAO03731.1"/>
    <property type="molecule type" value="Genomic_DNA"/>
</dbReference>
<dbReference type="RefSeq" id="NP_763689.1">
    <property type="nucleotide sequence ID" value="NC_004461.1"/>
</dbReference>
<dbReference type="RefSeq" id="WP_001830465.1">
    <property type="nucleotide sequence ID" value="NZ_WBME01000049.1"/>
</dbReference>
<dbReference type="SMR" id="Q8CQF5"/>
<dbReference type="GeneID" id="50017550"/>
<dbReference type="KEGG" id="sep:SE_0134"/>
<dbReference type="PATRIC" id="fig|176280.10.peg.125"/>
<dbReference type="eggNOG" id="COG0394">
    <property type="taxonomic scope" value="Bacteria"/>
</dbReference>
<dbReference type="HOGENOM" id="CLU_071415_3_2_9"/>
<dbReference type="OrthoDB" id="9784339at2"/>
<dbReference type="Proteomes" id="UP000001411">
    <property type="component" value="Chromosome"/>
</dbReference>
<dbReference type="GO" id="GO:0005737">
    <property type="term" value="C:cytoplasm"/>
    <property type="evidence" value="ECO:0007669"/>
    <property type="project" value="UniProtKB-SubCell"/>
</dbReference>
<dbReference type="GO" id="GO:0030612">
    <property type="term" value="F:arsenate reductase (thioredoxin) activity"/>
    <property type="evidence" value="ECO:0007669"/>
    <property type="project" value="UniProtKB-UniRule"/>
</dbReference>
<dbReference type="GO" id="GO:0004725">
    <property type="term" value="F:protein tyrosine phosphatase activity"/>
    <property type="evidence" value="ECO:0007669"/>
    <property type="project" value="InterPro"/>
</dbReference>
<dbReference type="GO" id="GO:0046685">
    <property type="term" value="P:response to arsenic-containing substance"/>
    <property type="evidence" value="ECO:0007669"/>
    <property type="project" value="UniProtKB-KW"/>
</dbReference>
<dbReference type="CDD" id="cd16345">
    <property type="entry name" value="LMWP_ArsC"/>
    <property type="match status" value="1"/>
</dbReference>
<dbReference type="FunFam" id="3.40.50.2300:FF:000237">
    <property type="entry name" value="Arsenate reductase"/>
    <property type="match status" value="1"/>
</dbReference>
<dbReference type="Gene3D" id="3.40.50.2300">
    <property type="match status" value="1"/>
</dbReference>
<dbReference type="HAMAP" id="MF_01624">
    <property type="entry name" value="Arsenate_reduct"/>
    <property type="match status" value="1"/>
</dbReference>
<dbReference type="InterPro" id="IPR014064">
    <property type="entry name" value="Arsenate_reductase_ArsC"/>
</dbReference>
<dbReference type="InterPro" id="IPR023485">
    <property type="entry name" value="Ptyr_pPase"/>
</dbReference>
<dbReference type="InterPro" id="IPR036196">
    <property type="entry name" value="Ptyr_pPase_sf"/>
</dbReference>
<dbReference type="NCBIfam" id="TIGR02691">
    <property type="entry name" value="arsC_pI258_fam"/>
    <property type="match status" value="1"/>
</dbReference>
<dbReference type="NCBIfam" id="NF010053">
    <property type="entry name" value="PRK13530.1"/>
    <property type="match status" value="1"/>
</dbReference>
<dbReference type="PANTHER" id="PTHR43428">
    <property type="entry name" value="ARSENATE REDUCTASE"/>
    <property type="match status" value="1"/>
</dbReference>
<dbReference type="PANTHER" id="PTHR43428:SF1">
    <property type="entry name" value="ARSENATE REDUCTASE"/>
    <property type="match status" value="1"/>
</dbReference>
<dbReference type="Pfam" id="PF01451">
    <property type="entry name" value="LMWPc"/>
    <property type="match status" value="1"/>
</dbReference>
<dbReference type="SMART" id="SM00226">
    <property type="entry name" value="LMWPc"/>
    <property type="match status" value="1"/>
</dbReference>
<dbReference type="SUPFAM" id="SSF52788">
    <property type="entry name" value="Phosphotyrosine protein phosphatases I"/>
    <property type="match status" value="1"/>
</dbReference>
<comment type="function">
    <text evidence="1">Catalyzes the reduction of arsenate [As(V)] to arsenite [As(III)].</text>
</comment>
<comment type="catalytic activity">
    <reaction evidence="1">
        <text>arsenate + [thioredoxin]-dithiol + H(+) = arsenite + [thioredoxin]-disulfide + H2O</text>
        <dbReference type="Rhea" id="RHEA:43848"/>
        <dbReference type="Rhea" id="RHEA-COMP:10698"/>
        <dbReference type="Rhea" id="RHEA-COMP:10700"/>
        <dbReference type="ChEBI" id="CHEBI:15377"/>
        <dbReference type="ChEBI" id="CHEBI:15378"/>
        <dbReference type="ChEBI" id="CHEBI:29242"/>
        <dbReference type="ChEBI" id="CHEBI:29950"/>
        <dbReference type="ChEBI" id="CHEBI:48597"/>
        <dbReference type="ChEBI" id="CHEBI:50058"/>
        <dbReference type="EC" id="1.20.4.4"/>
    </reaction>
</comment>
<comment type="subcellular location">
    <subcellularLocation>
        <location evidence="1">Cytoplasm</location>
    </subcellularLocation>
</comment>
<comment type="similarity">
    <text evidence="1">Belongs to the low molecular weight phosphotyrosine protein phosphatase family. Thioredoxin-coupled ArsC subfamily.</text>
</comment>
<accession>Q8CQF5</accession>
<evidence type="ECO:0000255" key="1">
    <source>
        <dbReference type="HAMAP-Rule" id="MF_01624"/>
    </source>
</evidence>
<reference key="1">
    <citation type="journal article" date="2003" name="Mol. Microbiol.">
        <title>Genome-based analysis of virulence genes in a non-biofilm-forming Staphylococcus epidermidis strain (ATCC 12228).</title>
        <authorList>
            <person name="Zhang Y.-Q."/>
            <person name="Ren S.-X."/>
            <person name="Li H.-L."/>
            <person name="Wang Y.-X."/>
            <person name="Fu G."/>
            <person name="Yang J."/>
            <person name="Qin Z.-Q."/>
            <person name="Miao Y.-G."/>
            <person name="Wang W.-Y."/>
            <person name="Chen R.-S."/>
            <person name="Shen Y."/>
            <person name="Chen Z."/>
            <person name="Yuan Z.-H."/>
            <person name="Zhao G.-P."/>
            <person name="Qu D."/>
            <person name="Danchin A."/>
            <person name="Wen Y.-M."/>
        </authorList>
    </citation>
    <scope>NUCLEOTIDE SEQUENCE [LARGE SCALE GENOMIC DNA]</scope>
    <source>
        <strain>ATCC 12228 / FDA PCI 1200</strain>
    </source>
</reference>
<protein>
    <recommendedName>
        <fullName evidence="1">Arsenate reductase</fullName>
        <ecNumber evidence="1">1.20.4.4</ecNumber>
    </recommendedName>
</protein>
<keyword id="KW-0059">Arsenical resistance</keyword>
<keyword id="KW-0963">Cytoplasm</keyword>
<keyword id="KW-1015">Disulfide bond</keyword>
<keyword id="KW-0560">Oxidoreductase</keyword>
<keyword id="KW-0676">Redox-active center</keyword>
<proteinExistence type="inferred from homology"/>
<gene>
    <name evidence="1" type="primary">arsC</name>
    <name type="ordered locus">SE_0134</name>
</gene>
<name>ARSC_STAES</name>
<feature type="chain" id="PRO_0000162527" description="Arsenate reductase">
    <location>
        <begin position="1"/>
        <end position="131"/>
    </location>
</feature>
<feature type="active site" description="Nucleophile" evidence="1">
    <location>
        <position position="10"/>
    </location>
</feature>
<feature type="active site" description="Nucleophile" evidence="1">
    <location>
        <position position="82"/>
    </location>
</feature>
<feature type="active site" description="Nucleophile" evidence="1">
    <location>
        <position position="89"/>
    </location>
</feature>
<feature type="disulfide bond" description="Redox-active; alternate" evidence="1">
    <location>
        <begin position="10"/>
        <end position="82"/>
    </location>
</feature>
<feature type="disulfide bond" description="Redox-active; alternate" evidence="1">
    <location>
        <begin position="82"/>
        <end position="89"/>
    </location>
</feature>